<proteinExistence type="evidence at protein level"/>
<protein>
    <recommendedName>
        <fullName evidence="10">Galactoside alpha-(1,2)-fucosyltransferase 2</fullName>
    </recommendedName>
    <alternativeName>
        <fullName>Alpha 1,2-fucosyltransferase</fullName>
    </alternativeName>
    <alternativeName>
        <fullName>Alpha 1,2-fucosyltransferase B</fullName>
    </alternativeName>
    <alternativeName>
        <fullName>Alpha 1-2 fucosyltransferase</fullName>
    </alternativeName>
    <alternativeName>
        <fullName>Alpha(1,2)FT 2</fullName>
    </alternativeName>
    <alternativeName>
        <fullName>Fucosyltransferase 2</fullName>
    </alternativeName>
    <alternativeName>
        <fullName>GDP-L-fucose:beta-D-galactoside 2-alpha-L-fucosyltransferase 2</fullName>
    </alternativeName>
    <alternativeName>
        <fullName>Secretor blood group alpha-2-fucosyltransferase</fullName>
    </alternativeName>
    <alternativeName>
        <fullName evidence="10">Type 1 galactoside alpha-(1,2)-fucosyltransferase FUT2</fullName>
        <ecNumber evidence="6 7">2.4.1.69</ecNumber>
    </alternativeName>
    <alternativeName>
        <fullName evidence="10">Type 2 galactoside alpha-(1,2)-fucosyltransferase FUT2</fullName>
        <ecNumber evidence="6 7">2.4.1.344</ecNumber>
    </alternativeName>
</protein>
<gene>
    <name evidence="12" type="primary">Fut2</name>
    <name type="synonym">Ftb</name>
    <name type="synonym">Sec1</name>
</gene>
<feature type="chain" id="PRO_0000149114" description="Galactoside alpha-(1,2)-fucosyltransferase 2">
    <location>
        <begin position="1"/>
        <end position="354"/>
    </location>
</feature>
<feature type="topological domain" description="Cytoplasmic" evidence="4">
    <location>
        <begin position="1"/>
        <end position="5"/>
    </location>
</feature>
<feature type="transmembrane region" description="Helical; Signal-anchor for type II membrane protein" evidence="4">
    <location>
        <begin position="6"/>
        <end position="26"/>
    </location>
</feature>
<feature type="topological domain" description="Lumenal" evidence="4">
    <location>
        <begin position="27"/>
        <end position="354"/>
    </location>
</feature>
<feature type="region of interest" description="Disordered" evidence="5">
    <location>
        <begin position="43"/>
        <end position="68"/>
    </location>
</feature>
<feature type="compositionally biased region" description="Polar residues" evidence="5">
    <location>
        <begin position="45"/>
        <end position="56"/>
    </location>
</feature>
<feature type="compositionally biased region" description="Basic and acidic residues" evidence="5">
    <location>
        <begin position="57"/>
        <end position="68"/>
    </location>
</feature>
<feature type="glycosylation site" description="N-linked (GlcNAc...) asparagine" evidence="4">
    <location>
        <position position="199"/>
    </location>
</feature>
<feature type="splice variant" id="VSP_016526" description="In isoform 2." evidence="8 9">
    <original>H</original>
    <variation>ALTPACPRSHFHLKAKGVTCYVAGRAF</variation>
    <location>
        <position position="354"/>
    </location>
</feature>
<feature type="sequence conflict" description="In Ref. 1 and 3." evidence="10" ref="1 3">
    <original>T</original>
    <variation>I</variation>
    <location>
        <position position="26"/>
    </location>
</feature>
<feature type="sequence conflict" description="In Ref. 4; AAB41515." evidence="10" ref="4">
    <original>V</original>
    <variation>G</variation>
    <location>
        <position position="271"/>
    </location>
</feature>
<keyword id="KW-0025">Alternative splicing</keyword>
<keyword id="KW-0325">Glycoprotein</keyword>
<keyword id="KW-0328">Glycosyltransferase</keyword>
<keyword id="KW-0333">Golgi apparatus</keyword>
<keyword id="KW-0443">Lipid metabolism</keyword>
<keyword id="KW-0472">Membrane</keyword>
<keyword id="KW-1185">Reference proteome</keyword>
<keyword id="KW-0735">Signal-anchor</keyword>
<keyword id="KW-0808">Transferase</keyword>
<keyword id="KW-0812">Transmembrane</keyword>
<keyword id="KW-1133">Transmembrane helix</keyword>
<reference key="1">
    <citation type="journal article" date="2001" name="Biochemistry">
        <title>An amino acid region at the N-terminus of rat hepatoma alpha1--&gt;2 fucosyltransferase modulates enzyme activity and interaction with lipids: strong preference for glycosphingolipids containing terminal Galbeta1--&gt;3GalNAc-structures.</title>
        <authorList>
            <person name="Sherwood A.L."/>
            <person name="Stroud M.R."/>
            <person name="Levery S.B."/>
            <person name="Holmes E.H."/>
        </authorList>
    </citation>
    <scope>NUCLEOTIDE SEQUENCE [MRNA] (ISOFORM 2)</scope>
    <scope>FUNCTION</scope>
    <scope>CATALYTIC ACTIVITY</scope>
    <source>
        <strain>Fischer</strain>
    </source>
</reference>
<reference key="2">
    <citation type="journal article" date="2001" name="Eur. J. Biochem.">
        <title>Comparison of the three rat GDP-L-fucose:beta-D-galactoside 2-alpha-L-fucosyltransferases FTA, FTB and FTC.</title>
        <authorList>
            <person name="Bureau V."/>
            <person name="Marionneau S."/>
            <person name="Cailleau-Thomas A."/>
            <person name="Le Moullac-Vaidye B."/>
            <person name="Liehr T."/>
            <person name="Le Pendu J."/>
        </authorList>
    </citation>
    <scope>NUCLEOTIDE SEQUENCE [GENOMIC DNA]</scope>
    <scope>FUNCTION</scope>
    <scope>CATALYTIC ACTIVITY</scope>
    <scope>BIOPHYSICOCHEMICAL PROPERTIES</scope>
    <scope>TISSUE SPECIFICITY</scope>
    <source>
        <strain>BDIX</strain>
    </source>
</reference>
<reference key="3">
    <citation type="submission" date="1997-08" db="EMBL/GenBank/DDBJ databases">
        <authorList>
            <person name="Soejima M."/>
            <person name="Wang B."/>
            <person name="Koda Y."/>
            <person name="Kimura H."/>
        </authorList>
    </citation>
    <scope>NUCLEOTIDE SEQUENCE [MRNA] (ISOFORM 1)</scope>
    <source>
        <tissue>Colon cancer</tissue>
    </source>
</reference>
<reference key="4">
    <citation type="journal article" date="1994" name="Biochem. J.">
        <title>Evidence for two distinct alpha(1,2)-fucosyltransferase genes differentially expressed throughout the rat colon.</title>
        <authorList>
            <person name="Piau J.-P."/>
            <person name="Labarriere N."/>
            <person name="Dabouis G."/>
            <person name="Denis M.G."/>
        </authorList>
    </citation>
    <scope>NUCLEOTIDE SEQUENCE [MRNA] OF 222-354 (ISOFORM 2)</scope>
    <source>
        <strain>BDIX</strain>
    </source>
</reference>
<sequence>MASAQVPFSFPLAHFLIFVFVTSTITHLQQRIVKLQPLSEKELPMTTQMSSGNTESPEMRRDSEQHGNGELRGMFTINSIGRLGNQMGEYATLFALARMNGRLAFIPASMHNALAPIFRISLPVLHSDTAKKIPWQNYHLNDWMEERYRHIPGHFVRFTGYPCSWTFYHHLRPEILKEFTLHDHVREEAQAFLRGLRVNGSQPSTFVGVHVRRGDYVHVMPNVWKGVVADRGYLEKALDMFRARYSSPVFVVTSNGMAWCRENINASRGDVVFAGNGIEGSPAKDFALLTQCNHTIMTIGTFGIWAAYLAGGDTIYLANYTLPDSPFLKVFKPEAAFLPEWVGIPADLSPLLKH</sequence>
<name>FUT2_RAT</name>
<organism>
    <name type="scientific">Rattus norvegicus</name>
    <name type="common">Rat</name>
    <dbReference type="NCBI Taxonomy" id="10116"/>
    <lineage>
        <taxon>Eukaryota</taxon>
        <taxon>Metazoa</taxon>
        <taxon>Chordata</taxon>
        <taxon>Craniata</taxon>
        <taxon>Vertebrata</taxon>
        <taxon>Euteleostomi</taxon>
        <taxon>Mammalia</taxon>
        <taxon>Eutheria</taxon>
        <taxon>Euarchontoglires</taxon>
        <taxon>Glires</taxon>
        <taxon>Rodentia</taxon>
        <taxon>Myomorpha</taxon>
        <taxon>Muroidea</taxon>
        <taxon>Muridae</taxon>
        <taxon>Murinae</taxon>
        <taxon>Rattus</taxon>
    </lineage>
</organism>
<accession>Q10984</accession>
<accession>O35087</accession>
<accession>Q9JK44</accession>
<accession>Q9R275</accession>
<dbReference type="EC" id="2.4.1.69" evidence="6 7"/>
<dbReference type="EC" id="2.4.1.344" evidence="6 7"/>
<dbReference type="EMBL" id="AF264005">
    <property type="protein sequence ID" value="AAF72200.1"/>
    <property type="molecule type" value="mRNA"/>
</dbReference>
<dbReference type="EMBL" id="AF131238">
    <property type="protein sequence ID" value="AAD24469.1"/>
    <property type="molecule type" value="Genomic_DNA"/>
</dbReference>
<dbReference type="EMBL" id="AB006138">
    <property type="protein sequence ID" value="BAA21742.1"/>
    <property type="molecule type" value="mRNA"/>
</dbReference>
<dbReference type="EMBL" id="L26010">
    <property type="protein sequence ID" value="AAB41515.1"/>
    <property type="molecule type" value="mRNA"/>
</dbReference>
<dbReference type="PIR" id="S46494">
    <property type="entry name" value="S46494"/>
</dbReference>
<dbReference type="RefSeq" id="NP_113823.1">
    <property type="nucleotide sequence ID" value="NM_031635.1"/>
</dbReference>
<dbReference type="RefSeq" id="XP_006229197.1">
    <property type="nucleotide sequence ID" value="XM_006229135.3"/>
</dbReference>
<dbReference type="FunCoup" id="Q10984">
    <property type="interactions" value="4"/>
</dbReference>
<dbReference type="STRING" id="10116.ENSRNOP00000028519"/>
<dbReference type="SwissLipids" id="SLP:000000796"/>
<dbReference type="CAZy" id="GT11">
    <property type="family name" value="Glycosyltransferase Family 11"/>
</dbReference>
<dbReference type="GlyCosmos" id="Q10984">
    <property type="glycosylation" value="1 site, No reported glycans"/>
</dbReference>
<dbReference type="GlyGen" id="Q10984">
    <property type="glycosylation" value="1 site"/>
</dbReference>
<dbReference type="PhosphoSitePlus" id="Q10984"/>
<dbReference type="PaxDb" id="10116-ENSRNOP00000028519"/>
<dbReference type="GeneID" id="58924"/>
<dbReference type="KEGG" id="rno:58924"/>
<dbReference type="UCSC" id="RGD:2639">
    <molecule id="Q10984-1"/>
    <property type="organism name" value="rat"/>
</dbReference>
<dbReference type="AGR" id="RGD:2639"/>
<dbReference type="CTD" id="2524"/>
<dbReference type="RGD" id="2639">
    <property type="gene designation" value="Fut2"/>
</dbReference>
<dbReference type="eggNOG" id="ENOG502S316">
    <property type="taxonomic scope" value="Eukaryota"/>
</dbReference>
<dbReference type="InParanoid" id="Q10984"/>
<dbReference type="OrthoDB" id="3226at2759"/>
<dbReference type="PhylomeDB" id="Q10984"/>
<dbReference type="TreeFam" id="TF315810"/>
<dbReference type="BRENDA" id="2.4.1.344">
    <property type="organism ID" value="5301"/>
</dbReference>
<dbReference type="BRENDA" id="2.4.1.69">
    <property type="organism ID" value="5301"/>
</dbReference>
<dbReference type="Reactome" id="R-RNO-9033807">
    <property type="pathway name" value="ABO blood group biosynthesis"/>
</dbReference>
<dbReference type="Reactome" id="R-RNO-9037629">
    <property type="pathway name" value="Lewis blood group biosynthesis"/>
</dbReference>
<dbReference type="Reactome" id="R-RNO-9840309">
    <property type="pathway name" value="Glycosphingolipid biosynthesis"/>
</dbReference>
<dbReference type="SABIO-RK" id="Q10984"/>
<dbReference type="UniPathway" id="UPA00378"/>
<dbReference type="PRO" id="PR:Q10984"/>
<dbReference type="Proteomes" id="UP000002494">
    <property type="component" value="Unplaced"/>
</dbReference>
<dbReference type="GO" id="GO:0032580">
    <property type="term" value="C:Golgi cisterna membrane"/>
    <property type="evidence" value="ECO:0007669"/>
    <property type="project" value="UniProtKB-SubCell"/>
</dbReference>
<dbReference type="GO" id="GO:0031127">
    <property type="term" value="F:alpha-(1,2)-fucosyltransferase activity"/>
    <property type="evidence" value="ECO:0000314"/>
    <property type="project" value="UniProtKB"/>
</dbReference>
<dbReference type="GO" id="GO:0008417">
    <property type="term" value="F:fucosyltransferase activity"/>
    <property type="evidence" value="ECO:0000266"/>
    <property type="project" value="RGD"/>
</dbReference>
<dbReference type="GO" id="GO:0008107">
    <property type="term" value="F:galactoside 2-alpha-L-fucosyltransferase activity"/>
    <property type="evidence" value="ECO:0000314"/>
    <property type="project" value="RGD"/>
</dbReference>
<dbReference type="GO" id="GO:0036065">
    <property type="term" value="P:fucosylation"/>
    <property type="evidence" value="ECO:0000314"/>
    <property type="project" value="UniProtKB"/>
</dbReference>
<dbReference type="GO" id="GO:0006664">
    <property type="term" value="P:glycolipid metabolic process"/>
    <property type="evidence" value="ECO:0000250"/>
    <property type="project" value="UniProtKB"/>
</dbReference>
<dbReference type="GO" id="GO:0009312">
    <property type="term" value="P:oligosaccharide biosynthetic process"/>
    <property type="evidence" value="ECO:0000266"/>
    <property type="project" value="RGD"/>
</dbReference>
<dbReference type="GO" id="GO:0006486">
    <property type="term" value="P:protein glycosylation"/>
    <property type="evidence" value="ECO:0000266"/>
    <property type="project" value="RGD"/>
</dbReference>
<dbReference type="GO" id="GO:0030155">
    <property type="term" value="P:regulation of cell adhesion"/>
    <property type="evidence" value="ECO:0000250"/>
    <property type="project" value="UniProtKB"/>
</dbReference>
<dbReference type="GO" id="GO:0001936">
    <property type="term" value="P:regulation of endothelial cell proliferation"/>
    <property type="evidence" value="ECO:0000250"/>
    <property type="project" value="UniProtKB"/>
</dbReference>
<dbReference type="CDD" id="cd11301">
    <property type="entry name" value="Fut1_Fut2_like"/>
    <property type="match status" value="1"/>
</dbReference>
<dbReference type="InterPro" id="IPR002516">
    <property type="entry name" value="Glyco_trans_11"/>
</dbReference>
<dbReference type="PANTHER" id="PTHR11927">
    <property type="entry name" value="GALACTOSIDE 2-L-FUCOSYLTRANSFERASE"/>
    <property type="match status" value="1"/>
</dbReference>
<dbReference type="PANTHER" id="PTHR11927:SF2">
    <property type="entry name" value="GALACTOSIDE ALPHA-(1,2)-FUCOSYLTRANSFERASE 2"/>
    <property type="match status" value="1"/>
</dbReference>
<dbReference type="Pfam" id="PF01531">
    <property type="entry name" value="Glyco_transf_11"/>
    <property type="match status" value="1"/>
</dbReference>
<evidence type="ECO:0000250" key="1"/>
<evidence type="ECO:0000250" key="2">
    <source>
        <dbReference type="UniProtKB" id="Q28113"/>
    </source>
</evidence>
<evidence type="ECO:0000250" key="3">
    <source>
        <dbReference type="UniProtKB" id="Q9JL27"/>
    </source>
</evidence>
<evidence type="ECO:0000255" key="4"/>
<evidence type="ECO:0000256" key="5">
    <source>
        <dbReference type="SAM" id="MobiDB-lite"/>
    </source>
</evidence>
<evidence type="ECO:0000269" key="6">
    <source>
    </source>
</evidence>
<evidence type="ECO:0000269" key="7">
    <source>
    </source>
</evidence>
<evidence type="ECO:0000303" key="8">
    <source>
    </source>
</evidence>
<evidence type="ECO:0000303" key="9">
    <source>
    </source>
</evidence>
<evidence type="ECO:0000305" key="10"/>
<evidence type="ECO:0000305" key="11">
    <source>
    </source>
</evidence>
<evidence type="ECO:0000312" key="12">
    <source>
        <dbReference type="RGD" id="2639"/>
    </source>
</evidence>
<comment type="function">
    <text evidence="3 6 7">Catalyzes the transfer of L-fucose, from a guanosine diphosphate-beta-L-fucose, to the terminal galactose on both O- and N-linked glycans chains of cell surface glycoproteins and glycolipids and the resulting epitope regulates several processes such as cell-cell interaction including host-microbe interaction, cell surface expression and cell proliferation (PubMed:11179967, PubMed:11341836). Preferentially fucosylates gangliosides GA1 and GM1 in the antrum, cecum and colon and in the female reproductive organs. Fucosylated host glycoproteins or glycolipids mediate interaction with intestinal microbiota influencing its composition (By similarity). Creates a soluble precursor oligosaccharide FuC-alpha ((1,2)Galbeta-) called the H antigen which is an essential substrate for the final step in the soluble ABO blood group antigen synthesis pathway (PubMed:11179967).</text>
</comment>
<comment type="catalytic activity">
    <reaction evidence="6 7">
        <text>a beta-D-galactosyl-(1-&gt;3)-N-acetyl-beta-D-glucosaminyl derivative + GDP-beta-L-fucose = an alpha-L-Fuc-(1-&gt;2)-beta-D-Gal-(1-&gt;3)-beta-D-GlcNAc derivative + GDP + H(+)</text>
        <dbReference type="Rhea" id="RHEA:50664"/>
        <dbReference type="ChEBI" id="CHEBI:15378"/>
        <dbReference type="ChEBI" id="CHEBI:57273"/>
        <dbReference type="ChEBI" id="CHEBI:58189"/>
        <dbReference type="ChEBI" id="CHEBI:133506"/>
        <dbReference type="ChEBI" id="CHEBI:133509"/>
        <dbReference type="EC" id="2.4.1.69"/>
    </reaction>
    <physiologicalReaction direction="left-to-right" evidence="11">
        <dbReference type="Rhea" id="RHEA:50665"/>
    </physiologicalReaction>
</comment>
<comment type="catalytic activity">
    <reaction evidence="6 7">
        <text>a beta-D-galactosyl-(1-&gt;4)-N-acetyl-beta-D-glucosaminyl derivative + GDP-beta-L-fucose = an alpha-L-Fuc-(1-&gt;2)-beta-D-Gal-(1-&gt;4)-beta-D-GlcNAc derivative + GDP + H(+)</text>
        <dbReference type="Rhea" id="RHEA:50668"/>
        <dbReference type="ChEBI" id="CHEBI:15378"/>
        <dbReference type="ChEBI" id="CHEBI:57273"/>
        <dbReference type="ChEBI" id="CHEBI:58189"/>
        <dbReference type="ChEBI" id="CHEBI:133507"/>
        <dbReference type="ChEBI" id="CHEBI:133510"/>
        <dbReference type="EC" id="2.4.1.344"/>
    </reaction>
    <physiologicalReaction direction="left-to-right" evidence="11">
        <dbReference type="Rhea" id="RHEA:50669"/>
    </physiologicalReaction>
</comment>
<comment type="catalytic activity">
    <reaction evidence="7">
        <text>a ganglioside GM1 (d18:1(4E)) + GDP-beta-L-fucose = a ganglioside Fuc-GM1 (d18:1(4E)) + GDP + H(+)</text>
        <dbReference type="Rhea" id="RHEA:42040"/>
        <dbReference type="ChEBI" id="CHEBI:15378"/>
        <dbReference type="ChEBI" id="CHEBI:57273"/>
        <dbReference type="ChEBI" id="CHEBI:58189"/>
        <dbReference type="ChEBI" id="CHEBI:77709"/>
        <dbReference type="ChEBI" id="CHEBI:78607"/>
    </reaction>
    <physiologicalReaction direction="left-to-right" evidence="11">
        <dbReference type="Rhea" id="RHEA:42041"/>
    </physiologicalReaction>
</comment>
<comment type="catalytic activity">
    <reaction evidence="7">
        <text>a globoside GalGb4Cer (d18:1(4E)) + GDP-beta-L-fucose = a globoside Globo-H (d18:1(4E)) + GDP + H(+)</text>
        <dbReference type="Rhea" id="RHEA:42044"/>
        <dbReference type="ChEBI" id="CHEBI:15378"/>
        <dbReference type="ChEBI" id="CHEBI:57273"/>
        <dbReference type="ChEBI" id="CHEBI:58189"/>
        <dbReference type="ChEBI" id="CHEBI:62571"/>
        <dbReference type="ChEBI" id="CHEBI:62649"/>
    </reaction>
    <physiologicalReaction direction="left-to-right" evidence="11">
        <dbReference type="Rhea" id="RHEA:42045"/>
    </physiologicalReaction>
</comment>
<comment type="catalytic activity">
    <reaction evidence="3">
        <text>a neolactoside nLc4Cer + GDP-beta-L-fucose = a neolactoside IV(2)-alpha-Fuc-nLc4Cer + GDP + H(+)</text>
        <dbReference type="Rhea" id="RHEA:48800"/>
        <dbReference type="ChEBI" id="CHEBI:15378"/>
        <dbReference type="ChEBI" id="CHEBI:57273"/>
        <dbReference type="ChEBI" id="CHEBI:58189"/>
        <dbReference type="ChEBI" id="CHEBI:90376"/>
        <dbReference type="ChEBI" id="CHEBI:90803"/>
    </reaction>
    <physiologicalReaction direction="left-to-right" evidence="3">
        <dbReference type="Rhea" id="RHEA:48801"/>
    </physiologicalReaction>
</comment>
<comment type="catalytic activity">
    <reaction evidence="3">
        <text>a neolactoside nLc4Cer(d18:1(4E)) + GDP-beta-L-fucose = a neolactoside IV(2)-alpha-Fuc-nLc4Cer(d18:1(4E)) + GDP + H(+)</text>
        <dbReference type="Rhea" id="RHEA:48304"/>
        <dbReference type="ChEBI" id="CHEBI:15378"/>
        <dbReference type="ChEBI" id="CHEBI:17006"/>
        <dbReference type="ChEBI" id="CHEBI:28691"/>
        <dbReference type="ChEBI" id="CHEBI:57273"/>
        <dbReference type="ChEBI" id="CHEBI:58189"/>
    </reaction>
    <physiologicalReaction direction="left-to-right" evidence="3">
        <dbReference type="Rhea" id="RHEA:48305"/>
    </physiologicalReaction>
</comment>
<comment type="catalytic activity">
    <reaction evidence="3">
        <text>a ganglioside GM1 + GDP-beta-L-fucose = a ganglioside Fuc-GM1 + GDP + H(+)</text>
        <dbReference type="Rhea" id="RHEA:48292"/>
        <dbReference type="ChEBI" id="CHEBI:15378"/>
        <dbReference type="ChEBI" id="CHEBI:57273"/>
        <dbReference type="ChEBI" id="CHEBI:58189"/>
        <dbReference type="ChEBI" id="CHEBI:82639"/>
        <dbReference type="ChEBI" id="CHEBI:90189"/>
    </reaction>
    <physiologicalReaction direction="left-to-right" evidence="3">
        <dbReference type="Rhea" id="RHEA:48293"/>
    </physiologicalReaction>
</comment>
<comment type="catalytic activity">
    <reaction evidence="3">
        <text>a ganglioside GA1 + GDP-beta-L-fucose = a ganglioside Fuc-GA1 + GDP + H(+)</text>
        <dbReference type="Rhea" id="RHEA:48320"/>
        <dbReference type="ChEBI" id="CHEBI:15378"/>
        <dbReference type="ChEBI" id="CHEBI:57273"/>
        <dbReference type="ChEBI" id="CHEBI:58189"/>
        <dbReference type="ChEBI" id="CHEBI:88069"/>
        <dbReference type="ChEBI" id="CHEBI:90262"/>
    </reaction>
    <physiologicalReaction direction="left-to-right" evidence="3">
        <dbReference type="Rhea" id="RHEA:48321"/>
    </physiologicalReaction>
</comment>
<comment type="catalytic activity">
    <reaction evidence="3">
        <text>Lc4Cer + GDP-beta-L-fucose = alpha-L-fucosyl-(1-&gt;2)-beta-D-galactosyl-(1-&gt;3)-N-acetyl-beta-D-glucosaminyl-(1-&gt;3)-beta-D-galactosyl-(1-&gt;4)-beta-D-glucosyl-(1&lt;-&gt;1')-ceramide + GDP + H(+)</text>
        <dbReference type="Rhea" id="RHEA:48792"/>
        <dbReference type="ChEBI" id="CHEBI:15378"/>
        <dbReference type="ChEBI" id="CHEBI:57273"/>
        <dbReference type="ChEBI" id="CHEBI:58189"/>
        <dbReference type="ChEBI" id="CHEBI:90800"/>
        <dbReference type="ChEBI" id="CHEBI:90802"/>
    </reaction>
    <physiologicalReaction direction="left-to-right" evidence="3">
        <dbReference type="Rhea" id="RHEA:48793"/>
    </physiologicalReaction>
</comment>
<comment type="catalytic activity">
    <reaction evidence="3">
        <text>a beta-D-Gal-(1-&gt;3)-beta-D-GlcNAc-(1-&gt;3)-beta-D-Gal-(1-&gt;4)-beta-D-Glc-(1&lt;-&gt;1')-Cer(d18:1(4E)) + GDP-beta-L-fucose = alpha-L-fucosyl-(1-&gt;2)- beta-D-galactosyl-(1-&gt;3)-N-acetyl-beta-D-glucosaminyl-(1-&gt;3)-beta-D-galactosyl-(1-&gt;4)-beta-D-glucosyl-(1&lt;-&gt;1')-N-acylsphing-4-enine + GDP + H(+)</text>
        <dbReference type="Rhea" id="RHEA:32175"/>
        <dbReference type="ChEBI" id="CHEBI:15378"/>
        <dbReference type="ChEBI" id="CHEBI:17292"/>
        <dbReference type="ChEBI" id="CHEBI:28743"/>
        <dbReference type="ChEBI" id="CHEBI:57273"/>
        <dbReference type="ChEBI" id="CHEBI:58189"/>
        <dbReference type="EC" id="2.4.1.69"/>
    </reaction>
    <physiologicalReaction direction="left-to-right" evidence="3">
        <dbReference type="Rhea" id="RHEA:32176"/>
    </physiologicalReaction>
</comment>
<comment type="catalytic activity">
    <reaction evidence="3">
        <text>a ganglioside GD1b + GDP-beta-L-fucose = a ganglioside Fuc-GD1b + GDP + H(+)</text>
        <dbReference type="Rhea" id="RHEA:48324"/>
        <dbReference type="ChEBI" id="CHEBI:15378"/>
        <dbReference type="ChEBI" id="CHEBI:57273"/>
        <dbReference type="ChEBI" id="CHEBI:58189"/>
        <dbReference type="ChEBI" id="CHEBI:82939"/>
        <dbReference type="ChEBI" id="CHEBI:90265"/>
    </reaction>
    <physiologicalReaction direction="left-to-right" evidence="3">
        <dbReference type="Rhea" id="RHEA:48325"/>
    </physiologicalReaction>
</comment>
<comment type="catalytic activity">
    <reaction evidence="3">
        <text>a lactoside III(4)-a-Fuc-Lc4Cer + GDP-beta-L-fucose = a lactoside IV(2),III(4)-a-[Fuc]2-Lc4Cer + GDP + H(+)</text>
        <dbReference type="Rhea" id="RHEA:62616"/>
        <dbReference type="ChEBI" id="CHEBI:15378"/>
        <dbReference type="ChEBI" id="CHEBI:57273"/>
        <dbReference type="ChEBI" id="CHEBI:58189"/>
        <dbReference type="ChEBI" id="CHEBI:90811"/>
        <dbReference type="ChEBI" id="CHEBI:142612"/>
    </reaction>
    <physiologicalReaction direction="left-to-right" evidence="3">
        <dbReference type="Rhea" id="RHEA:62617"/>
    </physiologicalReaction>
</comment>
<comment type="catalytic activity">
    <reaction evidence="2">
        <text>beta-D-galactosyl-(1-&gt;3)-N-acetyl-D-galactosamine + GDP-beta-L-fucose = alpha-L-fucosyl-(1-&gt;2)-beta-D-galactosyl-(1-&gt;3)-N-acetyl-D-galactosamine + GDP + H(+)</text>
        <dbReference type="Rhea" id="RHEA:62964"/>
        <dbReference type="ChEBI" id="CHEBI:15378"/>
        <dbReference type="ChEBI" id="CHEBI:57273"/>
        <dbReference type="ChEBI" id="CHEBI:58189"/>
        <dbReference type="ChEBI" id="CHEBI:84728"/>
        <dbReference type="ChEBI" id="CHEBI:546807"/>
    </reaction>
    <physiologicalReaction direction="left-to-right" evidence="2">
        <dbReference type="Rhea" id="RHEA:62965"/>
    </physiologicalReaction>
</comment>
<comment type="biophysicochemical properties">
    <kinetics>
        <KM evidence="6">33 mM for phenyl-beta-galactose</KM>
        <KM evidence="6">20 mM for N-acetyllactosamine</KM>
        <KM evidence="6">8.3 mM for lacto-N-biose</KM>
        <KM evidence="6">3.8 mM for galacto-N-biose</KM>
        <KM evidence="6">24 uM for GDP-fucose</KM>
    </kinetics>
</comment>
<comment type="pathway">
    <text evidence="6 7">Protein modification; protein glycosylation.</text>
</comment>
<comment type="subcellular location">
    <subcellularLocation>
        <location evidence="1">Golgi apparatus</location>
        <location evidence="1">Golgi stack membrane</location>
        <topology evidence="1">Single-pass type II membrane protein</topology>
    </subcellularLocation>
    <text evidence="1">Membrane-bound form in trans cisternae of Golgi.</text>
</comment>
<comment type="alternative products">
    <event type="alternative splicing"/>
    <isoform>
        <id>Q10984-1</id>
        <name>1</name>
        <sequence type="displayed"/>
    </isoform>
    <isoform>
        <id>Q10984-2</id>
        <name>2</name>
        <sequence type="described" ref="VSP_016526"/>
    </isoform>
</comment>
<comment type="tissue specificity">
    <text evidence="6">Specifically expressed in gut.</text>
</comment>
<comment type="miscellaneous">
    <text>In rat, there are three genes (Fut1/Fta, Fut2/Ftb and Ftc) which encode galactoside 2-L-fucosyltransferase. They are expressed in a tissue-specific manner and Ftc may have no enzymatic activity.</text>
</comment>
<comment type="similarity">
    <text evidence="10">Belongs to the glycosyltransferase 11 family.</text>
</comment>